<dbReference type="EC" id="2.7.8.13" evidence="1"/>
<dbReference type="EMBL" id="CR954246">
    <property type="protein sequence ID" value="CAI87555.1"/>
    <property type="molecule type" value="Genomic_DNA"/>
</dbReference>
<dbReference type="SMR" id="Q3IG01"/>
<dbReference type="STRING" id="326442.PSHAa2507"/>
<dbReference type="KEGG" id="pha:PSHAa2507"/>
<dbReference type="PATRIC" id="fig|326442.8.peg.2417"/>
<dbReference type="eggNOG" id="COG0472">
    <property type="taxonomic scope" value="Bacteria"/>
</dbReference>
<dbReference type="HOGENOM" id="CLU_023982_0_0_6"/>
<dbReference type="BioCyc" id="PHAL326442:PSHA_RS12345-MONOMER"/>
<dbReference type="UniPathway" id="UPA00219"/>
<dbReference type="Proteomes" id="UP000006843">
    <property type="component" value="Chromosome I"/>
</dbReference>
<dbReference type="GO" id="GO:0005886">
    <property type="term" value="C:plasma membrane"/>
    <property type="evidence" value="ECO:0007669"/>
    <property type="project" value="UniProtKB-SubCell"/>
</dbReference>
<dbReference type="GO" id="GO:0046872">
    <property type="term" value="F:metal ion binding"/>
    <property type="evidence" value="ECO:0007669"/>
    <property type="project" value="UniProtKB-KW"/>
</dbReference>
<dbReference type="GO" id="GO:0008963">
    <property type="term" value="F:phospho-N-acetylmuramoyl-pentapeptide-transferase activity"/>
    <property type="evidence" value="ECO:0007669"/>
    <property type="project" value="UniProtKB-UniRule"/>
</dbReference>
<dbReference type="GO" id="GO:0051992">
    <property type="term" value="F:UDP-N-acetylmuramoyl-L-alanyl-D-glutamyl-meso-2,6-diaminopimelyl-D-alanyl-D-alanine:undecaprenyl-phosphate transferase activity"/>
    <property type="evidence" value="ECO:0007669"/>
    <property type="project" value="RHEA"/>
</dbReference>
<dbReference type="GO" id="GO:0051301">
    <property type="term" value="P:cell division"/>
    <property type="evidence" value="ECO:0007669"/>
    <property type="project" value="UniProtKB-KW"/>
</dbReference>
<dbReference type="GO" id="GO:0071555">
    <property type="term" value="P:cell wall organization"/>
    <property type="evidence" value="ECO:0007669"/>
    <property type="project" value="UniProtKB-KW"/>
</dbReference>
<dbReference type="GO" id="GO:0009252">
    <property type="term" value="P:peptidoglycan biosynthetic process"/>
    <property type="evidence" value="ECO:0007669"/>
    <property type="project" value="UniProtKB-UniRule"/>
</dbReference>
<dbReference type="GO" id="GO:0008360">
    <property type="term" value="P:regulation of cell shape"/>
    <property type="evidence" value="ECO:0007669"/>
    <property type="project" value="UniProtKB-KW"/>
</dbReference>
<dbReference type="CDD" id="cd06852">
    <property type="entry name" value="GT_MraY"/>
    <property type="match status" value="1"/>
</dbReference>
<dbReference type="HAMAP" id="MF_00038">
    <property type="entry name" value="MraY"/>
    <property type="match status" value="1"/>
</dbReference>
<dbReference type="InterPro" id="IPR000715">
    <property type="entry name" value="Glycosyl_transferase_4"/>
</dbReference>
<dbReference type="InterPro" id="IPR003524">
    <property type="entry name" value="PNAcMuramoyl-5peptid_Trfase"/>
</dbReference>
<dbReference type="InterPro" id="IPR018480">
    <property type="entry name" value="PNAcMuramoyl-5peptid_Trfase_CS"/>
</dbReference>
<dbReference type="NCBIfam" id="TIGR00445">
    <property type="entry name" value="mraY"/>
    <property type="match status" value="1"/>
</dbReference>
<dbReference type="PANTHER" id="PTHR22926">
    <property type="entry name" value="PHOSPHO-N-ACETYLMURAMOYL-PENTAPEPTIDE-TRANSFERASE"/>
    <property type="match status" value="1"/>
</dbReference>
<dbReference type="PANTHER" id="PTHR22926:SF5">
    <property type="entry name" value="PHOSPHO-N-ACETYLMURAMOYL-PENTAPEPTIDE-TRANSFERASE HOMOLOG"/>
    <property type="match status" value="1"/>
</dbReference>
<dbReference type="Pfam" id="PF00953">
    <property type="entry name" value="Glycos_transf_4"/>
    <property type="match status" value="1"/>
</dbReference>
<dbReference type="Pfam" id="PF10555">
    <property type="entry name" value="MraY_sig1"/>
    <property type="match status" value="1"/>
</dbReference>
<dbReference type="PROSITE" id="PS01347">
    <property type="entry name" value="MRAY_1"/>
    <property type="match status" value="1"/>
</dbReference>
<dbReference type="PROSITE" id="PS01348">
    <property type="entry name" value="MRAY_2"/>
    <property type="match status" value="1"/>
</dbReference>
<feature type="chain" id="PRO_0000235468" description="Phospho-N-acetylmuramoyl-pentapeptide-transferase">
    <location>
        <begin position="1"/>
        <end position="360"/>
    </location>
</feature>
<feature type="transmembrane region" description="Helical" evidence="1">
    <location>
        <begin position="18"/>
        <end position="38"/>
    </location>
</feature>
<feature type="transmembrane region" description="Helical" evidence="1">
    <location>
        <begin position="73"/>
        <end position="93"/>
    </location>
</feature>
<feature type="transmembrane region" description="Helical" evidence="1">
    <location>
        <begin position="97"/>
        <end position="117"/>
    </location>
</feature>
<feature type="transmembrane region" description="Helical" evidence="1">
    <location>
        <begin position="135"/>
        <end position="155"/>
    </location>
</feature>
<feature type="transmembrane region" description="Helical" evidence="1">
    <location>
        <begin position="168"/>
        <end position="188"/>
    </location>
</feature>
<feature type="transmembrane region" description="Helical" evidence="1">
    <location>
        <begin position="199"/>
        <end position="219"/>
    </location>
</feature>
<feature type="transmembrane region" description="Helical" evidence="1">
    <location>
        <begin position="236"/>
        <end position="256"/>
    </location>
</feature>
<feature type="transmembrane region" description="Helical" evidence="1">
    <location>
        <begin position="263"/>
        <end position="283"/>
    </location>
</feature>
<feature type="transmembrane region" description="Helical" evidence="1">
    <location>
        <begin position="288"/>
        <end position="308"/>
    </location>
</feature>
<feature type="transmembrane region" description="Helical" evidence="1">
    <location>
        <begin position="339"/>
        <end position="359"/>
    </location>
</feature>
<name>MRAY_PSET1</name>
<evidence type="ECO:0000255" key="1">
    <source>
        <dbReference type="HAMAP-Rule" id="MF_00038"/>
    </source>
</evidence>
<proteinExistence type="inferred from homology"/>
<accession>Q3IG01</accession>
<protein>
    <recommendedName>
        <fullName evidence="1">Phospho-N-acetylmuramoyl-pentapeptide-transferase</fullName>
        <ecNumber evidence="1">2.7.8.13</ecNumber>
    </recommendedName>
    <alternativeName>
        <fullName evidence="1">UDP-MurNAc-pentapeptide phosphotransferase</fullName>
    </alternativeName>
</protein>
<reference key="1">
    <citation type="journal article" date="2005" name="Genome Res.">
        <title>Coping with cold: the genome of the versatile marine Antarctica bacterium Pseudoalteromonas haloplanktis TAC125.</title>
        <authorList>
            <person name="Medigue C."/>
            <person name="Krin E."/>
            <person name="Pascal G."/>
            <person name="Barbe V."/>
            <person name="Bernsel A."/>
            <person name="Bertin P.N."/>
            <person name="Cheung F."/>
            <person name="Cruveiller S."/>
            <person name="D'Amico S."/>
            <person name="Duilio A."/>
            <person name="Fang G."/>
            <person name="Feller G."/>
            <person name="Ho C."/>
            <person name="Mangenot S."/>
            <person name="Marino G."/>
            <person name="Nilsson J."/>
            <person name="Parrilli E."/>
            <person name="Rocha E.P.C."/>
            <person name="Rouy Z."/>
            <person name="Sekowska A."/>
            <person name="Tutino M.L."/>
            <person name="Vallenet D."/>
            <person name="von Heijne G."/>
            <person name="Danchin A."/>
        </authorList>
    </citation>
    <scope>NUCLEOTIDE SEQUENCE [LARGE SCALE GENOMIC DNA]</scope>
    <source>
        <strain>TAC 125</strain>
    </source>
</reference>
<gene>
    <name evidence="1" type="primary">mraY</name>
    <name type="ordered locus">PSHAa2507</name>
</gene>
<sequence>MLVWLAEYLTQYYTGFNVFSYLTLRAILGILTALMMSLYLGPKLIRALQRMQIGQTVRDDGPQSHLSKSGTPTMGGLLILAAIFTSTLLWADLSNKYVWATLFVIGSLGVVGFVDDYRKVIRKDPKGLIAKWKYFWQSVIALVVACALFFTSTQANETSLVVPFFKDVLPQLGLFYIVITYFALVGTSNAVNLTDGLDGLAIVPTILVAAALAIIAYLTGNVNFSNYLHIPYLPLASELVVVCTAIVGAGLGFLWFNTYPAQVFMGDVGSLALGGALGIIAVLVRQELLLIIMGGVFVMEALSVILQVGSYKLRGQRIFRMAPIHHHYELKGWPEPRVIVRFWIISIVLVLAGLATLKIR</sequence>
<comment type="function">
    <text evidence="1">Catalyzes the initial step of the lipid cycle reactions in the biosynthesis of the cell wall peptidoglycan: transfers peptidoglycan precursor phospho-MurNAc-pentapeptide from UDP-MurNAc-pentapeptide onto the lipid carrier undecaprenyl phosphate, yielding undecaprenyl-pyrophosphoryl-MurNAc-pentapeptide, known as lipid I.</text>
</comment>
<comment type="catalytic activity">
    <reaction evidence="1">
        <text>UDP-N-acetyl-alpha-D-muramoyl-L-alanyl-gamma-D-glutamyl-meso-2,6-diaminopimeloyl-D-alanyl-D-alanine + di-trans,octa-cis-undecaprenyl phosphate = di-trans,octa-cis-undecaprenyl diphospho-N-acetyl-alpha-D-muramoyl-L-alanyl-D-glutamyl-meso-2,6-diaminopimeloyl-D-alanyl-D-alanine + UMP</text>
        <dbReference type="Rhea" id="RHEA:28386"/>
        <dbReference type="ChEBI" id="CHEBI:57865"/>
        <dbReference type="ChEBI" id="CHEBI:60392"/>
        <dbReference type="ChEBI" id="CHEBI:61386"/>
        <dbReference type="ChEBI" id="CHEBI:61387"/>
        <dbReference type="EC" id="2.7.8.13"/>
    </reaction>
</comment>
<comment type="cofactor">
    <cofactor evidence="1">
        <name>Mg(2+)</name>
        <dbReference type="ChEBI" id="CHEBI:18420"/>
    </cofactor>
</comment>
<comment type="pathway">
    <text evidence="1">Cell wall biogenesis; peptidoglycan biosynthesis.</text>
</comment>
<comment type="subcellular location">
    <subcellularLocation>
        <location evidence="1">Cell inner membrane</location>
        <topology evidence="1">Multi-pass membrane protein</topology>
    </subcellularLocation>
</comment>
<comment type="similarity">
    <text evidence="1">Belongs to the glycosyltransferase 4 family. MraY subfamily.</text>
</comment>
<organism>
    <name type="scientific">Pseudoalteromonas translucida (strain TAC 125)</name>
    <dbReference type="NCBI Taxonomy" id="326442"/>
    <lineage>
        <taxon>Bacteria</taxon>
        <taxon>Pseudomonadati</taxon>
        <taxon>Pseudomonadota</taxon>
        <taxon>Gammaproteobacteria</taxon>
        <taxon>Alteromonadales</taxon>
        <taxon>Pseudoalteromonadaceae</taxon>
        <taxon>Pseudoalteromonas</taxon>
    </lineage>
</organism>
<keyword id="KW-0131">Cell cycle</keyword>
<keyword id="KW-0132">Cell division</keyword>
<keyword id="KW-0997">Cell inner membrane</keyword>
<keyword id="KW-1003">Cell membrane</keyword>
<keyword id="KW-0133">Cell shape</keyword>
<keyword id="KW-0961">Cell wall biogenesis/degradation</keyword>
<keyword id="KW-0460">Magnesium</keyword>
<keyword id="KW-0472">Membrane</keyword>
<keyword id="KW-0479">Metal-binding</keyword>
<keyword id="KW-0573">Peptidoglycan synthesis</keyword>
<keyword id="KW-1185">Reference proteome</keyword>
<keyword id="KW-0808">Transferase</keyword>
<keyword id="KW-0812">Transmembrane</keyword>
<keyword id="KW-1133">Transmembrane helix</keyword>